<accession>A8A225</accession>
<gene>
    <name evidence="1" type="primary">rihB</name>
    <name type="ordered locus">EcHS_A2298</name>
</gene>
<keyword id="KW-0106">Calcium</keyword>
<keyword id="KW-0326">Glycosidase</keyword>
<keyword id="KW-0378">Hydrolase</keyword>
<keyword id="KW-0479">Metal-binding</keyword>
<sequence length="313" mass="33766">MEKRKIILDCDPGHDDAIAMMMAAKHPAIDLLGITIVAGNQTLDKTLINGLNVCQKLEINVPVYAGMPQPIMRKQIVADNIHGETGLDGPVFEPLTRQAESTHAVKYIIDTLMASDGDITLVPVGPLSNIAVAMRMQPAILPKIREIVLMGGAYGTGNFTPSAEFNIFADPEAARVVFTSGVPLVMMGLDLTNQTVCTPDVIARMERAGGPAGELFSDIMNFTLKTQFENYGLAGGPVHDATCIGYLINPDGIKTQEMYVEVDVNSGPCYGRTVCDELGVLGKPANTKVGITIDTDWFWGLVEECVRGYIKTH</sequence>
<proteinExistence type="inferred from homology"/>
<organism>
    <name type="scientific">Escherichia coli O9:H4 (strain HS)</name>
    <dbReference type="NCBI Taxonomy" id="331112"/>
    <lineage>
        <taxon>Bacteria</taxon>
        <taxon>Pseudomonadati</taxon>
        <taxon>Pseudomonadota</taxon>
        <taxon>Gammaproteobacteria</taxon>
        <taxon>Enterobacterales</taxon>
        <taxon>Enterobacteriaceae</taxon>
        <taxon>Escherichia</taxon>
    </lineage>
</organism>
<name>RIHB_ECOHS</name>
<protein>
    <recommendedName>
        <fullName evidence="1">Pyrimidine-specific ribonucleoside hydrolase RihB</fullName>
        <ecNumber evidence="1">3.2.2.8</ecNumber>
    </recommendedName>
    <alternativeName>
        <fullName evidence="1">Cytidine/uridine-specific hydrolase</fullName>
    </alternativeName>
</protein>
<reference key="1">
    <citation type="journal article" date="2008" name="J. Bacteriol.">
        <title>The pangenome structure of Escherichia coli: comparative genomic analysis of E. coli commensal and pathogenic isolates.</title>
        <authorList>
            <person name="Rasko D.A."/>
            <person name="Rosovitz M.J."/>
            <person name="Myers G.S.A."/>
            <person name="Mongodin E.F."/>
            <person name="Fricke W.F."/>
            <person name="Gajer P."/>
            <person name="Crabtree J."/>
            <person name="Sebaihia M."/>
            <person name="Thomson N.R."/>
            <person name="Chaudhuri R."/>
            <person name="Henderson I.R."/>
            <person name="Sperandio V."/>
            <person name="Ravel J."/>
        </authorList>
    </citation>
    <scope>NUCLEOTIDE SEQUENCE [LARGE SCALE GENOMIC DNA]</scope>
    <source>
        <strain>HS</strain>
    </source>
</reference>
<evidence type="ECO:0000255" key="1">
    <source>
        <dbReference type="HAMAP-Rule" id="MF_01433"/>
    </source>
</evidence>
<comment type="function">
    <text evidence="1">Hydrolyzes cytidine or uridine to ribose and cytosine or uracil, respectively. Has a clear preference for cytidine over uridine. Strictly specific for ribonucleosides.</text>
</comment>
<comment type="catalytic activity">
    <reaction evidence="1">
        <text>a pyrimidine ribonucleoside + H2O = a pyrimidine nucleobase + D-ribose</text>
        <dbReference type="Rhea" id="RHEA:56816"/>
        <dbReference type="ChEBI" id="CHEBI:15377"/>
        <dbReference type="ChEBI" id="CHEBI:26432"/>
        <dbReference type="ChEBI" id="CHEBI:47013"/>
        <dbReference type="ChEBI" id="CHEBI:141014"/>
        <dbReference type="EC" id="3.2.2.8"/>
    </reaction>
</comment>
<comment type="cofactor">
    <cofactor evidence="1">
        <name>Ca(2+)</name>
        <dbReference type="ChEBI" id="CHEBI:29108"/>
    </cofactor>
    <text evidence="1">Binds 1 Ca(2+) ion per monomer.</text>
</comment>
<comment type="subunit">
    <text evidence="1">Homotetramer.</text>
</comment>
<comment type="similarity">
    <text evidence="1">Belongs to the IUNH family. RihB subfamily.</text>
</comment>
<feature type="chain" id="PRO_1000068532" description="Pyrimidine-specific ribonucleoside hydrolase RihB">
    <location>
        <begin position="1"/>
        <end position="313"/>
    </location>
</feature>
<feature type="active site" description="Proton acceptor" evidence="1">
    <location>
        <position position="11"/>
    </location>
</feature>
<feature type="binding site" evidence="1">
    <location>
        <position position="11"/>
    </location>
    <ligand>
        <name>Ca(2+)</name>
        <dbReference type="ChEBI" id="CHEBI:29108"/>
    </ligand>
</feature>
<feature type="binding site" evidence="1">
    <location>
        <position position="16"/>
    </location>
    <ligand>
        <name>Ca(2+)</name>
        <dbReference type="ChEBI" id="CHEBI:29108"/>
    </ligand>
</feature>
<feature type="binding site" evidence="1">
    <location>
        <position position="124"/>
    </location>
    <ligand>
        <name>Ca(2+)</name>
        <dbReference type="ChEBI" id="CHEBI:29108"/>
    </ligand>
</feature>
<feature type="binding site" evidence="1">
    <location>
        <position position="227"/>
    </location>
    <ligand>
        <name>substrate</name>
    </ligand>
</feature>
<feature type="binding site" evidence="1">
    <location>
        <position position="239"/>
    </location>
    <ligand>
        <name>substrate</name>
    </ligand>
</feature>
<feature type="binding site" evidence="1">
    <location>
        <position position="240"/>
    </location>
    <ligand>
        <name>Ca(2+)</name>
        <dbReference type="ChEBI" id="CHEBI:29108"/>
    </ligand>
</feature>
<dbReference type="EC" id="3.2.2.8" evidence="1"/>
<dbReference type="EMBL" id="CP000802">
    <property type="protein sequence ID" value="ABV06579.1"/>
    <property type="molecule type" value="Genomic_DNA"/>
</dbReference>
<dbReference type="RefSeq" id="WP_000415446.1">
    <property type="nucleotide sequence ID" value="NC_009800.1"/>
</dbReference>
<dbReference type="SMR" id="A8A225"/>
<dbReference type="GeneID" id="75172290"/>
<dbReference type="KEGG" id="ecx:EcHS_A2298"/>
<dbReference type="HOGENOM" id="CLU_036838_2_0_6"/>
<dbReference type="GO" id="GO:0005829">
    <property type="term" value="C:cytosol"/>
    <property type="evidence" value="ECO:0007669"/>
    <property type="project" value="TreeGrafter"/>
</dbReference>
<dbReference type="GO" id="GO:0005509">
    <property type="term" value="F:calcium ion binding"/>
    <property type="evidence" value="ECO:0007669"/>
    <property type="project" value="UniProtKB-UniRule"/>
</dbReference>
<dbReference type="GO" id="GO:0008477">
    <property type="term" value="F:purine nucleosidase activity"/>
    <property type="evidence" value="ECO:0007669"/>
    <property type="project" value="TreeGrafter"/>
</dbReference>
<dbReference type="GO" id="GO:0045437">
    <property type="term" value="F:uridine nucleosidase activity"/>
    <property type="evidence" value="ECO:0007669"/>
    <property type="project" value="UniProtKB-ARBA"/>
</dbReference>
<dbReference type="GO" id="GO:0006152">
    <property type="term" value="P:purine nucleoside catabolic process"/>
    <property type="evidence" value="ECO:0007669"/>
    <property type="project" value="TreeGrafter"/>
</dbReference>
<dbReference type="GO" id="GO:0006206">
    <property type="term" value="P:pyrimidine nucleobase metabolic process"/>
    <property type="evidence" value="ECO:0007669"/>
    <property type="project" value="UniProtKB-UniRule"/>
</dbReference>
<dbReference type="GO" id="GO:0046133">
    <property type="term" value="P:pyrimidine ribonucleoside catabolic process"/>
    <property type="evidence" value="ECO:0007669"/>
    <property type="project" value="InterPro"/>
</dbReference>
<dbReference type="CDD" id="cd02651">
    <property type="entry name" value="nuc_hydro_IU_UC_XIUA"/>
    <property type="match status" value="1"/>
</dbReference>
<dbReference type="FunFam" id="3.90.245.10:FF:000003">
    <property type="entry name" value="Pyrimidine-specific ribonucleoside hydrolase RihB"/>
    <property type="match status" value="1"/>
</dbReference>
<dbReference type="Gene3D" id="3.90.245.10">
    <property type="entry name" value="Ribonucleoside hydrolase-like"/>
    <property type="match status" value="1"/>
</dbReference>
<dbReference type="HAMAP" id="MF_01433">
    <property type="entry name" value="Pyrim_hydro_RihB"/>
    <property type="match status" value="1"/>
</dbReference>
<dbReference type="InterPro" id="IPR015910">
    <property type="entry name" value="I/U_nuclsd_hydro_CS"/>
</dbReference>
<dbReference type="InterPro" id="IPR001910">
    <property type="entry name" value="Inosine/uridine_hydrolase_dom"/>
</dbReference>
<dbReference type="InterPro" id="IPR023186">
    <property type="entry name" value="IUNH"/>
</dbReference>
<dbReference type="InterPro" id="IPR022977">
    <property type="entry name" value="Pyrim_hydro_RihB"/>
</dbReference>
<dbReference type="InterPro" id="IPR036452">
    <property type="entry name" value="Ribo_hydro-like"/>
</dbReference>
<dbReference type="NCBIfam" id="NF007417">
    <property type="entry name" value="PRK09955.1"/>
    <property type="match status" value="1"/>
</dbReference>
<dbReference type="PANTHER" id="PTHR12304">
    <property type="entry name" value="INOSINE-URIDINE PREFERRING NUCLEOSIDE HYDROLASE"/>
    <property type="match status" value="1"/>
</dbReference>
<dbReference type="PANTHER" id="PTHR12304:SF4">
    <property type="entry name" value="URIDINE NUCLEOSIDASE"/>
    <property type="match status" value="1"/>
</dbReference>
<dbReference type="Pfam" id="PF01156">
    <property type="entry name" value="IU_nuc_hydro"/>
    <property type="match status" value="1"/>
</dbReference>
<dbReference type="SUPFAM" id="SSF53590">
    <property type="entry name" value="Nucleoside hydrolase"/>
    <property type="match status" value="1"/>
</dbReference>
<dbReference type="PROSITE" id="PS01247">
    <property type="entry name" value="IUNH"/>
    <property type="match status" value="1"/>
</dbReference>